<organism>
    <name type="scientific">Halobacterium salinarum (strain ATCC 700922 / JCM 11081 / NRC-1)</name>
    <name type="common">Halobacterium halobium</name>
    <dbReference type="NCBI Taxonomy" id="64091"/>
    <lineage>
        <taxon>Archaea</taxon>
        <taxon>Methanobacteriati</taxon>
        <taxon>Methanobacteriota</taxon>
        <taxon>Stenosarchaea group</taxon>
        <taxon>Halobacteria</taxon>
        <taxon>Halobacteriales</taxon>
        <taxon>Halobacteriaceae</taxon>
        <taxon>Halobacterium</taxon>
        <taxon>Halobacterium salinarum NRC-34001</taxon>
    </lineage>
</organism>
<sequence length="119" mass="12819">MVQDATADGVMDASDACCAPPGNVDSDAMATDLQVLSAMGNDTRYELLRRIANADDGVCVCDLEATVGVSQSAVSQALSRLYTAGLVTRRKEGSWRYYEPTETTEVLLETLDDLRGNHE</sequence>
<comment type="function">
    <text evidence="1">Transcriptional repressor for the arsR2M operon.</text>
</comment>
<comment type="induction">
    <text evidence="3">Constitutively expressed.</text>
</comment>
<evidence type="ECO:0000250" key="1"/>
<evidence type="ECO:0000255" key="2">
    <source>
        <dbReference type="PROSITE-ProRule" id="PRU00340"/>
    </source>
</evidence>
<evidence type="ECO:0000305" key="3">
    <source>
    </source>
</evidence>
<gene>
    <name type="primary">arsR2</name>
    <name type="ordered locus">VNG_5176C</name>
</gene>
<dbReference type="EMBL" id="AF016485">
    <property type="protein sequence ID" value="AAC82906.1"/>
    <property type="molecule type" value="Genomic_DNA"/>
</dbReference>
<dbReference type="PIR" id="T08339">
    <property type="entry name" value="T08339"/>
</dbReference>
<dbReference type="RefSeq" id="WP_010890459.1">
    <property type="nucleotide sequence ID" value="NZ_BK010830.1"/>
</dbReference>
<dbReference type="SMR" id="O52026"/>
<dbReference type="FunCoup" id="O52026">
    <property type="interactions" value="2"/>
</dbReference>
<dbReference type="KEGG" id="hal:AAC82906.1"/>
<dbReference type="HOGENOM" id="CLU_097806_3_2_2"/>
<dbReference type="InParanoid" id="O52026"/>
<dbReference type="OrthoDB" id="46231at2157"/>
<dbReference type="PhylomeDB" id="O52026"/>
<dbReference type="Proteomes" id="UP000000554">
    <property type="component" value="Plasmid pNRC100"/>
</dbReference>
<dbReference type="GO" id="GO:0003677">
    <property type="term" value="F:DNA binding"/>
    <property type="evidence" value="ECO:0007669"/>
    <property type="project" value="UniProtKB-KW"/>
</dbReference>
<dbReference type="GO" id="GO:0003700">
    <property type="term" value="F:DNA-binding transcription factor activity"/>
    <property type="evidence" value="ECO:0007669"/>
    <property type="project" value="InterPro"/>
</dbReference>
<dbReference type="GO" id="GO:0046685">
    <property type="term" value="P:response to arsenic-containing substance"/>
    <property type="evidence" value="ECO:0007669"/>
    <property type="project" value="UniProtKB-KW"/>
</dbReference>
<dbReference type="CDD" id="cd00090">
    <property type="entry name" value="HTH_ARSR"/>
    <property type="match status" value="1"/>
</dbReference>
<dbReference type="Gene3D" id="1.10.10.10">
    <property type="entry name" value="Winged helix-like DNA-binding domain superfamily/Winged helix DNA-binding domain"/>
    <property type="match status" value="1"/>
</dbReference>
<dbReference type="InterPro" id="IPR011991">
    <property type="entry name" value="ArsR-like_HTH"/>
</dbReference>
<dbReference type="InterPro" id="IPR001845">
    <property type="entry name" value="HTH_ArsR_DNA-bd_dom"/>
</dbReference>
<dbReference type="InterPro" id="IPR051011">
    <property type="entry name" value="Metal_resp_trans_reg"/>
</dbReference>
<dbReference type="InterPro" id="IPR036388">
    <property type="entry name" value="WH-like_DNA-bd_sf"/>
</dbReference>
<dbReference type="InterPro" id="IPR036390">
    <property type="entry name" value="WH_DNA-bd_sf"/>
</dbReference>
<dbReference type="NCBIfam" id="NF033788">
    <property type="entry name" value="HTH_metalloreg"/>
    <property type="match status" value="1"/>
</dbReference>
<dbReference type="PANTHER" id="PTHR43132">
    <property type="entry name" value="ARSENICAL RESISTANCE OPERON REPRESSOR ARSR-RELATED"/>
    <property type="match status" value="1"/>
</dbReference>
<dbReference type="PANTHER" id="PTHR43132:SF2">
    <property type="entry name" value="ARSENICAL RESISTANCE OPERON REPRESSOR ARSR-RELATED"/>
    <property type="match status" value="1"/>
</dbReference>
<dbReference type="Pfam" id="PF01022">
    <property type="entry name" value="HTH_5"/>
    <property type="match status" value="1"/>
</dbReference>
<dbReference type="PRINTS" id="PR00778">
    <property type="entry name" value="HTHARSR"/>
</dbReference>
<dbReference type="SMART" id="SM00418">
    <property type="entry name" value="HTH_ARSR"/>
    <property type="match status" value="1"/>
</dbReference>
<dbReference type="SUPFAM" id="SSF46785">
    <property type="entry name" value="Winged helix' DNA-binding domain"/>
    <property type="match status" value="1"/>
</dbReference>
<dbReference type="PROSITE" id="PS50987">
    <property type="entry name" value="HTH_ARSR_2"/>
    <property type="match status" value="1"/>
</dbReference>
<geneLocation type="plasmid">
    <name>pNRC100</name>
</geneLocation>
<protein>
    <recommendedName>
        <fullName>Putative arsenical resistance operon repressor ArsR2</fullName>
    </recommendedName>
</protein>
<feature type="chain" id="PRO_0000429115" description="Putative arsenical resistance operon repressor ArsR2">
    <location>
        <begin position="1"/>
        <end position="119"/>
    </location>
</feature>
<feature type="domain" description="HTH arsR-type" evidence="2">
    <location>
        <begin position="24"/>
        <end position="119"/>
    </location>
</feature>
<feature type="DNA-binding region" description="H-T-H motif" evidence="2">
    <location>
        <begin position="60"/>
        <end position="83"/>
    </location>
</feature>
<proteinExistence type="evidence at transcript level"/>
<reference key="1">
    <citation type="journal article" date="1998" name="Genome Res.">
        <title>Snapshot of a large dynamic replicon in a halophilic archaeon: megaplasmid or minichromosome?</title>
        <authorList>
            <person name="Ng W.V."/>
            <person name="Ciufo S.A."/>
            <person name="Smith T.M."/>
            <person name="Bumgarner R.E."/>
            <person name="Baskin D."/>
            <person name="Faust J."/>
            <person name="Hall B."/>
            <person name="Loretz C."/>
            <person name="Seto J."/>
            <person name="Slagel J."/>
            <person name="Hood L."/>
            <person name="DasSarma S."/>
        </authorList>
    </citation>
    <scope>NUCLEOTIDE SEQUENCE [LARGE SCALE GENOMIC DNA]</scope>
    <source>
        <strain>ATCC 700922 / JCM 11081 / NRC-1</strain>
    </source>
</reference>
<reference key="2">
    <citation type="journal article" date="2000" name="Proc. Natl. Acad. Sci. U.S.A.">
        <title>Genome sequence of Halobacterium species NRC-1.</title>
        <authorList>
            <person name="Ng W.V."/>
            <person name="Kennedy S.P."/>
            <person name="Mahairas G.G."/>
            <person name="Berquist B."/>
            <person name="Pan M."/>
            <person name="Shukla H.D."/>
            <person name="Lasky S.R."/>
            <person name="Baliga N.S."/>
            <person name="Thorsson V."/>
            <person name="Sbrogna J."/>
            <person name="Swartzell S."/>
            <person name="Weir D."/>
            <person name="Hall J."/>
            <person name="Dahl T.A."/>
            <person name="Welti R."/>
            <person name="Goo Y.A."/>
            <person name="Leithauser B."/>
            <person name="Keller K."/>
            <person name="Cruz R."/>
            <person name="Danson M.J."/>
            <person name="Hough D.W."/>
            <person name="Maddocks D.G."/>
            <person name="Jablonski P.E."/>
            <person name="Krebs M.P."/>
            <person name="Angevine C.M."/>
            <person name="Dale H."/>
            <person name="Isenbarger T.A."/>
            <person name="Peck R.F."/>
            <person name="Pohlschroder M."/>
            <person name="Spudich J.L."/>
            <person name="Jung K.-H."/>
            <person name="Alam M."/>
            <person name="Freitas T."/>
            <person name="Hou S."/>
            <person name="Daniels C.J."/>
            <person name="Dennis P.P."/>
            <person name="Omer A.D."/>
            <person name="Ebhardt H."/>
            <person name="Lowe T.M."/>
            <person name="Liang P."/>
            <person name="Riley M."/>
            <person name="Hood L."/>
            <person name="DasSarma S."/>
        </authorList>
    </citation>
    <scope>NUCLEOTIDE SEQUENCE [LARGE SCALE GENOMIC DNA]</scope>
    <source>
        <strain>ATCC 700922 / JCM 11081 / NRC-1</strain>
    </source>
</reference>
<reference key="3">
    <citation type="journal article" date="2004" name="J. Bacteriol.">
        <title>Arsenic resistance in Halobacterium sp. strain NRC-1 examined by using an improved gene knockout system.</title>
        <authorList>
            <person name="Wang G."/>
            <person name="Kennedy S.P."/>
            <person name="Fasiludeen S."/>
            <person name="Rensing C."/>
            <person name="DasSarma S."/>
        </authorList>
    </citation>
    <scope>INDUCTION</scope>
    <source>
        <strain>ATCC 700922 / JCM 11081 / NRC-1</strain>
    </source>
</reference>
<keyword id="KW-0059">Arsenical resistance</keyword>
<keyword id="KW-0238">DNA-binding</keyword>
<keyword id="KW-0614">Plasmid</keyword>
<keyword id="KW-1185">Reference proteome</keyword>
<keyword id="KW-0804">Transcription</keyword>
<keyword id="KW-0805">Transcription regulation</keyword>
<accession>O52026</accession>
<name>ARSR2_HALSA</name>